<keyword id="KW-0414">Isoprene biosynthesis</keyword>
<keyword id="KW-0456">Lyase</keyword>
<keyword id="KW-0479">Metal-binding</keyword>
<sequence length="155" mass="16863">MRIGLGYDVHKLVENRPLIIGGVTIPHDKGLLGHSDADVLVHAIMDALLGAAALGDIGKHFPDSDKNFKNISSLLLLSKVKDLINKEGYKIVNIDCTIIAQKPKMLYHIDAMKKNICKCLKLDNNMLNIKATTEEGLGFTGKEEGISANAICLLD</sequence>
<dbReference type="EC" id="4.6.1.12" evidence="1"/>
<dbReference type="EMBL" id="CP000962">
    <property type="protein sequence ID" value="ACA57183.1"/>
    <property type="molecule type" value="Genomic_DNA"/>
</dbReference>
<dbReference type="RefSeq" id="WP_011947931.1">
    <property type="nucleotide sequence ID" value="NC_010520.1"/>
</dbReference>
<dbReference type="SMR" id="B1KRX5"/>
<dbReference type="GeneID" id="5184321"/>
<dbReference type="KEGG" id="cbl:CLK_3243"/>
<dbReference type="HOGENOM" id="CLU_084630_2_0_9"/>
<dbReference type="UniPathway" id="UPA00056">
    <property type="reaction ID" value="UER00095"/>
</dbReference>
<dbReference type="GO" id="GO:0008685">
    <property type="term" value="F:2-C-methyl-D-erythritol 2,4-cyclodiphosphate synthase activity"/>
    <property type="evidence" value="ECO:0007669"/>
    <property type="project" value="UniProtKB-UniRule"/>
</dbReference>
<dbReference type="GO" id="GO:0046872">
    <property type="term" value="F:metal ion binding"/>
    <property type="evidence" value="ECO:0007669"/>
    <property type="project" value="UniProtKB-KW"/>
</dbReference>
<dbReference type="GO" id="GO:0019288">
    <property type="term" value="P:isopentenyl diphosphate biosynthetic process, methylerythritol 4-phosphate pathway"/>
    <property type="evidence" value="ECO:0007669"/>
    <property type="project" value="UniProtKB-UniRule"/>
</dbReference>
<dbReference type="GO" id="GO:0016114">
    <property type="term" value="P:terpenoid biosynthetic process"/>
    <property type="evidence" value="ECO:0007669"/>
    <property type="project" value="InterPro"/>
</dbReference>
<dbReference type="CDD" id="cd00554">
    <property type="entry name" value="MECDP_synthase"/>
    <property type="match status" value="1"/>
</dbReference>
<dbReference type="FunFam" id="3.30.1330.50:FF:000001">
    <property type="entry name" value="2-C-methyl-D-erythritol 2,4-cyclodiphosphate synthase"/>
    <property type="match status" value="1"/>
</dbReference>
<dbReference type="Gene3D" id="3.30.1330.50">
    <property type="entry name" value="2-C-methyl-D-erythritol 2,4-cyclodiphosphate synthase"/>
    <property type="match status" value="1"/>
</dbReference>
<dbReference type="HAMAP" id="MF_00107">
    <property type="entry name" value="IspF"/>
    <property type="match status" value="1"/>
</dbReference>
<dbReference type="InterPro" id="IPR003526">
    <property type="entry name" value="MECDP_synthase"/>
</dbReference>
<dbReference type="InterPro" id="IPR020555">
    <property type="entry name" value="MECDP_synthase_CS"/>
</dbReference>
<dbReference type="InterPro" id="IPR036571">
    <property type="entry name" value="MECDP_synthase_sf"/>
</dbReference>
<dbReference type="NCBIfam" id="TIGR00151">
    <property type="entry name" value="ispF"/>
    <property type="match status" value="1"/>
</dbReference>
<dbReference type="PANTHER" id="PTHR43181">
    <property type="entry name" value="2-C-METHYL-D-ERYTHRITOL 2,4-CYCLODIPHOSPHATE SYNTHASE, CHLOROPLASTIC"/>
    <property type="match status" value="1"/>
</dbReference>
<dbReference type="PANTHER" id="PTHR43181:SF1">
    <property type="entry name" value="2-C-METHYL-D-ERYTHRITOL 2,4-CYCLODIPHOSPHATE SYNTHASE, CHLOROPLASTIC"/>
    <property type="match status" value="1"/>
</dbReference>
<dbReference type="Pfam" id="PF02542">
    <property type="entry name" value="YgbB"/>
    <property type="match status" value="1"/>
</dbReference>
<dbReference type="SUPFAM" id="SSF69765">
    <property type="entry name" value="IpsF-like"/>
    <property type="match status" value="1"/>
</dbReference>
<dbReference type="PROSITE" id="PS01350">
    <property type="entry name" value="ISPF"/>
    <property type="match status" value="1"/>
</dbReference>
<accession>B1KRX5</accession>
<comment type="function">
    <text evidence="1">Involved in the biosynthesis of isopentenyl diphosphate (IPP) and dimethylallyl diphosphate (DMAPP), two major building blocks of isoprenoid compounds. Catalyzes the conversion of 4-diphosphocytidyl-2-C-methyl-D-erythritol 2-phosphate (CDP-ME2P) to 2-C-methyl-D-erythritol 2,4-cyclodiphosphate (ME-CPP) with a corresponding release of cytidine 5-monophosphate (CMP).</text>
</comment>
<comment type="catalytic activity">
    <reaction evidence="1">
        <text>4-CDP-2-C-methyl-D-erythritol 2-phosphate = 2-C-methyl-D-erythritol 2,4-cyclic diphosphate + CMP</text>
        <dbReference type="Rhea" id="RHEA:23864"/>
        <dbReference type="ChEBI" id="CHEBI:57919"/>
        <dbReference type="ChEBI" id="CHEBI:58483"/>
        <dbReference type="ChEBI" id="CHEBI:60377"/>
        <dbReference type="EC" id="4.6.1.12"/>
    </reaction>
</comment>
<comment type="cofactor">
    <cofactor evidence="1">
        <name>a divalent metal cation</name>
        <dbReference type="ChEBI" id="CHEBI:60240"/>
    </cofactor>
    <text evidence="1">Binds 1 divalent metal cation per subunit.</text>
</comment>
<comment type="pathway">
    <text evidence="1">Isoprenoid biosynthesis; isopentenyl diphosphate biosynthesis via DXP pathway; isopentenyl diphosphate from 1-deoxy-D-xylulose 5-phosphate: step 4/6.</text>
</comment>
<comment type="subunit">
    <text evidence="1">Homotrimer.</text>
</comment>
<comment type="similarity">
    <text evidence="1">Belongs to the IspF family.</text>
</comment>
<evidence type="ECO:0000255" key="1">
    <source>
        <dbReference type="HAMAP-Rule" id="MF_00107"/>
    </source>
</evidence>
<protein>
    <recommendedName>
        <fullName evidence="1">2-C-methyl-D-erythritol 2,4-cyclodiphosphate synthase</fullName>
        <shortName evidence="1">MECDP-synthase</shortName>
        <shortName evidence="1">MECPP-synthase</shortName>
        <shortName evidence="1">MECPS</shortName>
        <ecNumber evidence="1">4.6.1.12</ecNumber>
    </recommendedName>
</protein>
<proteinExistence type="inferred from homology"/>
<reference key="1">
    <citation type="journal article" date="2007" name="PLoS ONE">
        <title>Analysis of the neurotoxin complex genes in Clostridium botulinum A1-A4 and B1 strains: BoNT/A3, /Ba4 and /B1 clusters are located within plasmids.</title>
        <authorList>
            <person name="Smith T.J."/>
            <person name="Hill K.K."/>
            <person name="Foley B.T."/>
            <person name="Detter J.C."/>
            <person name="Munk A.C."/>
            <person name="Bruce D.C."/>
            <person name="Doggett N.A."/>
            <person name="Smith L.A."/>
            <person name="Marks J.D."/>
            <person name="Xie G."/>
            <person name="Brettin T.S."/>
        </authorList>
    </citation>
    <scope>NUCLEOTIDE SEQUENCE [LARGE SCALE GENOMIC DNA]</scope>
    <source>
        <strain>Loch Maree / Type A3</strain>
    </source>
</reference>
<gene>
    <name evidence="1" type="primary">ispF</name>
    <name type="ordered locus">CLK_3243</name>
</gene>
<organism>
    <name type="scientific">Clostridium botulinum (strain Loch Maree / Type A3)</name>
    <dbReference type="NCBI Taxonomy" id="498214"/>
    <lineage>
        <taxon>Bacteria</taxon>
        <taxon>Bacillati</taxon>
        <taxon>Bacillota</taxon>
        <taxon>Clostridia</taxon>
        <taxon>Eubacteriales</taxon>
        <taxon>Clostridiaceae</taxon>
        <taxon>Clostridium</taxon>
    </lineage>
</organism>
<feature type="chain" id="PRO_1000094255" description="2-C-methyl-D-erythritol 2,4-cyclodiphosphate synthase">
    <location>
        <begin position="1"/>
        <end position="155"/>
    </location>
</feature>
<feature type="binding site" evidence="1">
    <location>
        <begin position="8"/>
        <end position="10"/>
    </location>
    <ligand>
        <name>4-CDP-2-C-methyl-D-erythritol 2-phosphate</name>
        <dbReference type="ChEBI" id="CHEBI:57919"/>
    </ligand>
</feature>
<feature type="binding site" evidence="1">
    <location>
        <position position="8"/>
    </location>
    <ligand>
        <name>a divalent metal cation</name>
        <dbReference type="ChEBI" id="CHEBI:60240"/>
    </ligand>
</feature>
<feature type="binding site" evidence="1">
    <location>
        <position position="10"/>
    </location>
    <ligand>
        <name>a divalent metal cation</name>
        <dbReference type="ChEBI" id="CHEBI:60240"/>
    </ligand>
</feature>
<feature type="binding site" evidence="1">
    <location>
        <begin position="34"/>
        <end position="35"/>
    </location>
    <ligand>
        <name>4-CDP-2-C-methyl-D-erythritol 2-phosphate</name>
        <dbReference type="ChEBI" id="CHEBI:57919"/>
    </ligand>
</feature>
<feature type="binding site" evidence="1">
    <location>
        <position position="42"/>
    </location>
    <ligand>
        <name>a divalent metal cation</name>
        <dbReference type="ChEBI" id="CHEBI:60240"/>
    </ligand>
</feature>
<feature type="binding site" evidence="1">
    <location>
        <begin position="56"/>
        <end position="58"/>
    </location>
    <ligand>
        <name>4-CDP-2-C-methyl-D-erythritol 2-phosphate</name>
        <dbReference type="ChEBI" id="CHEBI:57919"/>
    </ligand>
</feature>
<feature type="binding site" evidence="1">
    <location>
        <begin position="61"/>
        <end position="65"/>
    </location>
    <ligand>
        <name>4-CDP-2-C-methyl-D-erythritol 2-phosphate</name>
        <dbReference type="ChEBI" id="CHEBI:57919"/>
    </ligand>
</feature>
<feature type="binding site" evidence="1">
    <location>
        <begin position="100"/>
        <end position="106"/>
    </location>
    <ligand>
        <name>4-CDP-2-C-methyl-D-erythritol 2-phosphate</name>
        <dbReference type="ChEBI" id="CHEBI:57919"/>
    </ligand>
</feature>
<feature type="binding site" evidence="1">
    <location>
        <begin position="132"/>
        <end position="135"/>
    </location>
    <ligand>
        <name>4-CDP-2-C-methyl-D-erythritol 2-phosphate</name>
        <dbReference type="ChEBI" id="CHEBI:57919"/>
    </ligand>
</feature>
<feature type="binding site" evidence="1">
    <location>
        <position position="139"/>
    </location>
    <ligand>
        <name>4-CDP-2-C-methyl-D-erythritol 2-phosphate</name>
        <dbReference type="ChEBI" id="CHEBI:57919"/>
    </ligand>
</feature>
<feature type="binding site" evidence="1">
    <location>
        <position position="142"/>
    </location>
    <ligand>
        <name>4-CDP-2-C-methyl-D-erythritol 2-phosphate</name>
        <dbReference type="ChEBI" id="CHEBI:57919"/>
    </ligand>
</feature>
<feature type="site" description="Transition state stabilizer" evidence="1">
    <location>
        <position position="34"/>
    </location>
</feature>
<feature type="site" description="Transition state stabilizer" evidence="1">
    <location>
        <position position="133"/>
    </location>
</feature>
<name>ISPF_CLOBM</name>